<feature type="chain" id="PRO_0000211517" description="Charged multivesicular body protein 7">
    <location>
        <begin position="1"/>
        <end position="451"/>
    </location>
</feature>
<feature type="region of interest" description="Disordered" evidence="3">
    <location>
        <begin position="1"/>
        <end position="22"/>
    </location>
</feature>
<feature type="region of interest" description="Disordered" evidence="3">
    <location>
        <begin position="431"/>
        <end position="451"/>
    </location>
</feature>
<feature type="coiled-coil region" evidence="2">
    <location>
        <begin position="248"/>
        <end position="312"/>
    </location>
</feature>
<feature type="modified residue" description="Phosphoserine" evidence="6 7">
    <location>
        <position position="232"/>
    </location>
</feature>
<feature type="modified residue" description="Phosphothreonine" evidence="1">
    <location>
        <position position="409"/>
    </location>
</feature>
<feature type="modified residue" description="Phosphoserine" evidence="1">
    <location>
        <position position="411"/>
    </location>
</feature>
<feature type="modified residue" description="Phosphoserine" evidence="1">
    <location>
        <position position="432"/>
    </location>
</feature>
<feature type="modified residue" description="Phosphoserine" evidence="1">
    <location>
        <position position="442"/>
    </location>
</feature>
<feature type="splice variant" id="VSP_015343" description="In isoform 2." evidence="4">
    <original>FNAYQAGVGALKLSMKDVTVEKAESLVDQIQELCDTQDEVSQTLAGGVT</original>
    <variation>ATPLRALWSQSPTLQLPPLWSAVSGNPGFFQRVAGFSFLLGSLTSLGVR</variation>
    <location>
        <begin position="322"/>
        <end position="370"/>
    </location>
</feature>
<feature type="splice variant" id="VSP_015344" description="In isoform 2." evidence="4">
    <location>
        <begin position="371"/>
        <end position="451"/>
    </location>
</feature>
<name>CHMP7_MOUSE</name>
<reference key="1">
    <citation type="journal article" date="2004" name="Genome Res.">
        <title>The status, quality, and expansion of the NIH full-length cDNA project: the Mammalian Gene Collection (MGC).</title>
        <authorList>
            <consortium name="The MGC Project Team"/>
        </authorList>
    </citation>
    <scope>NUCLEOTIDE SEQUENCE [LARGE SCALE MRNA] (ISOFORMS 1 AND 2)</scope>
    <source>
        <strain>FVB/N</strain>
        <tissue>Eye</tissue>
        <tissue>Liver</tissue>
    </source>
</reference>
<reference key="2">
    <citation type="journal article" date="2004" name="Mol. Cell. Proteomics">
        <title>Phosphoproteomic analysis of the developing mouse brain.</title>
        <authorList>
            <person name="Ballif B.A."/>
            <person name="Villen J."/>
            <person name="Beausoleil S.A."/>
            <person name="Schwartz D."/>
            <person name="Gygi S.P."/>
        </authorList>
    </citation>
    <scope>PHOSPHORYLATION [LARGE SCALE ANALYSIS] AT SER-232</scope>
    <scope>IDENTIFICATION BY MASS SPECTROMETRY [LARGE SCALE ANALYSIS]</scope>
    <source>
        <tissue>Embryonic brain</tissue>
    </source>
</reference>
<reference key="3">
    <citation type="journal article" date="2010" name="Cell">
        <title>A tissue-specific atlas of mouse protein phosphorylation and expression.</title>
        <authorList>
            <person name="Huttlin E.L."/>
            <person name="Jedrychowski M.P."/>
            <person name="Elias J.E."/>
            <person name="Goswami T."/>
            <person name="Rad R."/>
            <person name="Beausoleil S.A."/>
            <person name="Villen J."/>
            <person name="Haas W."/>
            <person name="Sowa M.E."/>
            <person name="Gygi S.P."/>
        </authorList>
    </citation>
    <scope>PHOSPHORYLATION [LARGE SCALE ANALYSIS] AT SER-232</scope>
    <scope>IDENTIFICATION BY MASS SPECTROMETRY [LARGE SCALE ANALYSIS]</scope>
    <source>
        <tissue>Brain</tissue>
        <tissue>Lung</tissue>
        <tissue>Testis</tissue>
    </source>
</reference>
<evidence type="ECO:0000250" key="1">
    <source>
        <dbReference type="UniProtKB" id="Q8WUX9"/>
    </source>
</evidence>
<evidence type="ECO:0000255" key="2"/>
<evidence type="ECO:0000256" key="3">
    <source>
        <dbReference type="SAM" id="MobiDB-lite"/>
    </source>
</evidence>
<evidence type="ECO:0000303" key="4">
    <source>
    </source>
</evidence>
<evidence type="ECO:0000305" key="5"/>
<evidence type="ECO:0007744" key="6">
    <source>
    </source>
</evidence>
<evidence type="ECO:0007744" key="7">
    <source>
    </source>
</evidence>
<accession>Q8R1T1</accession>
<accession>Q8CFW4</accession>
<proteinExistence type="evidence at protein level"/>
<keyword id="KW-0025">Alternative splicing</keyword>
<keyword id="KW-0175">Coiled coil</keyword>
<keyword id="KW-0963">Cytoplasm</keyword>
<keyword id="KW-0539">Nucleus</keyword>
<keyword id="KW-0597">Phosphoprotein</keyword>
<keyword id="KW-0653">Protein transport</keyword>
<keyword id="KW-1185">Reference proteome</keyword>
<keyword id="KW-0813">Transport</keyword>
<organism>
    <name type="scientific">Mus musculus</name>
    <name type="common">Mouse</name>
    <dbReference type="NCBI Taxonomy" id="10090"/>
    <lineage>
        <taxon>Eukaryota</taxon>
        <taxon>Metazoa</taxon>
        <taxon>Chordata</taxon>
        <taxon>Craniata</taxon>
        <taxon>Vertebrata</taxon>
        <taxon>Euteleostomi</taxon>
        <taxon>Mammalia</taxon>
        <taxon>Eutheria</taxon>
        <taxon>Euarchontoglires</taxon>
        <taxon>Glires</taxon>
        <taxon>Rodentia</taxon>
        <taxon>Myomorpha</taxon>
        <taxon>Muroidea</taxon>
        <taxon>Muridae</taxon>
        <taxon>Murinae</taxon>
        <taxon>Mus</taxon>
        <taxon>Mus</taxon>
    </lineage>
</organism>
<gene>
    <name type="primary">Chmp7</name>
</gene>
<sequence>MWSPEREAQAPTGGDPAGLLPPEWEEDEERMSFLFSAFKRSREVNSTDWDSKMGFWAPLVLSHSRRQGVVRLRLRDLQEAFQRKGSVPLGLATVLQDLLRRGELQRESDFMASVDSSWISWGVGVFLLKPLKWTLSNMLGDHKVPAEEVLVAVELLKEKAEEVYRLYQNSPLSSHPVVALSELSALCANSCPDERTFYLVLLQLQKEKRVTVLEQNGEKIVKFARGPHAKVSPVNDVDVGVYQLMQSEQLLSRKVESLSQESERCKEEARRACRAGKKQLALRSLKAKQRTEKRIEALHAKLDTVQGILDRIYASQTDQMVFNAYQAGVGALKLSMKDVTVEKAESLVDQIQELCDTQDEVSQTLAGGVTNGLDFDSEELEKELDILLQDTTTEPLSLLETPQETTLYTNSVPKPRILDAELEAELEKLSLSEGGLIPSSKSPKRQLEPTL</sequence>
<protein>
    <recommendedName>
        <fullName>Charged multivesicular body protein 7</fullName>
    </recommendedName>
    <alternativeName>
        <fullName>Chromatin-modifying protein 7</fullName>
    </alternativeName>
</protein>
<dbReference type="EMBL" id="BC024115">
    <property type="protein sequence ID" value="AAH24115.1"/>
    <property type="molecule type" value="mRNA"/>
</dbReference>
<dbReference type="EMBL" id="BC033365">
    <property type="protein sequence ID" value="AAH33365.1"/>
    <property type="molecule type" value="mRNA"/>
</dbReference>
<dbReference type="CCDS" id="CCDS27242.1">
    <molecule id="Q8R1T1-1"/>
</dbReference>
<dbReference type="RefSeq" id="NP_598839.2">
    <molecule id="Q8R1T1-1"/>
    <property type="nucleotide sequence ID" value="NM_134078.4"/>
</dbReference>
<dbReference type="SMR" id="Q8R1T1"/>
<dbReference type="BioGRID" id="222870">
    <property type="interactions" value="2"/>
</dbReference>
<dbReference type="ComplexPortal" id="CPX-332">
    <property type="entry name" value="ESCRT-III complex, variant Chmp1b1"/>
</dbReference>
<dbReference type="ComplexPortal" id="CPX-333">
    <property type="entry name" value="ESCRT-III complex, variant Chmp1b2"/>
</dbReference>
<dbReference type="FunCoup" id="Q8R1T1">
    <property type="interactions" value="3260"/>
</dbReference>
<dbReference type="STRING" id="10090.ENSMUSP00000047700"/>
<dbReference type="iPTMnet" id="Q8R1T1"/>
<dbReference type="PhosphoSitePlus" id="Q8R1T1"/>
<dbReference type="jPOST" id="Q8R1T1"/>
<dbReference type="PaxDb" id="10090-ENSMUSP00000047700"/>
<dbReference type="PeptideAtlas" id="Q8R1T1"/>
<dbReference type="ProteomicsDB" id="281465">
    <molecule id="Q8R1T1-1"/>
</dbReference>
<dbReference type="ProteomicsDB" id="281466">
    <molecule id="Q8R1T1-2"/>
</dbReference>
<dbReference type="Pumba" id="Q8R1T1"/>
<dbReference type="Antibodypedia" id="22730">
    <property type="antibodies" value="76 antibodies from 19 providers"/>
</dbReference>
<dbReference type="DNASU" id="105513"/>
<dbReference type="Ensembl" id="ENSMUST00000036381.10">
    <molecule id="Q8R1T1-1"/>
    <property type="protein sequence ID" value="ENSMUSP00000047700.9"/>
    <property type="gene ID" value="ENSMUSG00000034190.10"/>
</dbReference>
<dbReference type="GeneID" id="105513"/>
<dbReference type="KEGG" id="mmu:105513"/>
<dbReference type="UCSC" id="uc007ums.2">
    <molecule id="Q8R1T1-1"/>
    <property type="organism name" value="mouse"/>
</dbReference>
<dbReference type="AGR" id="MGI:1913922"/>
<dbReference type="CTD" id="91782"/>
<dbReference type="MGI" id="MGI:1913922">
    <property type="gene designation" value="Chmp7"/>
</dbReference>
<dbReference type="VEuPathDB" id="HostDB:ENSMUSG00000034190"/>
<dbReference type="eggNOG" id="KOG2911">
    <property type="taxonomic scope" value="Eukaryota"/>
</dbReference>
<dbReference type="GeneTree" id="ENSGT00720000108860"/>
<dbReference type="HOGENOM" id="CLU_044768_0_0_1"/>
<dbReference type="InParanoid" id="Q8R1T1"/>
<dbReference type="OMA" id="LQLQFMR"/>
<dbReference type="OrthoDB" id="10250120at2759"/>
<dbReference type="PhylomeDB" id="Q8R1T1"/>
<dbReference type="TreeFam" id="TF312851"/>
<dbReference type="Reactome" id="R-MMU-1632852">
    <property type="pathway name" value="Macroautophagy"/>
</dbReference>
<dbReference type="Reactome" id="R-MMU-5620971">
    <property type="pathway name" value="Pyroptosis"/>
</dbReference>
<dbReference type="Reactome" id="R-MMU-917729">
    <property type="pathway name" value="Endosomal Sorting Complex Required For Transport (ESCRT)"/>
</dbReference>
<dbReference type="Reactome" id="R-MMU-9668328">
    <property type="pathway name" value="Sealing of the nuclear envelope (NE) by ESCRT-III"/>
</dbReference>
<dbReference type="BioGRID-ORCS" id="105513">
    <property type="hits" value="11 hits in 76 CRISPR screens"/>
</dbReference>
<dbReference type="ChiTaRS" id="Chmp7">
    <property type="organism name" value="mouse"/>
</dbReference>
<dbReference type="PRO" id="PR:Q8R1T1"/>
<dbReference type="Proteomes" id="UP000000589">
    <property type="component" value="Chromosome 14"/>
</dbReference>
<dbReference type="RNAct" id="Q8R1T1">
    <property type="molecule type" value="protein"/>
</dbReference>
<dbReference type="Bgee" id="ENSMUSG00000034190">
    <property type="expression patterns" value="Expressed in cortical plate and 269 other cell types or tissues"/>
</dbReference>
<dbReference type="GO" id="GO:1904930">
    <property type="term" value="C:amphisome membrane"/>
    <property type="evidence" value="ECO:0000266"/>
    <property type="project" value="ComplexPortal"/>
</dbReference>
<dbReference type="GO" id="GO:0000421">
    <property type="term" value="C:autophagosome membrane"/>
    <property type="evidence" value="ECO:0000266"/>
    <property type="project" value="ComplexPortal"/>
</dbReference>
<dbReference type="GO" id="GO:0000785">
    <property type="term" value="C:chromatin"/>
    <property type="evidence" value="ECO:0007669"/>
    <property type="project" value="Ensembl"/>
</dbReference>
<dbReference type="GO" id="GO:0005829">
    <property type="term" value="C:cytosol"/>
    <property type="evidence" value="ECO:0007669"/>
    <property type="project" value="Ensembl"/>
</dbReference>
<dbReference type="GO" id="GO:0000815">
    <property type="term" value="C:ESCRT III complex"/>
    <property type="evidence" value="ECO:0000250"/>
    <property type="project" value="UniProtKB"/>
</dbReference>
<dbReference type="GO" id="GO:0000776">
    <property type="term" value="C:kinetochore"/>
    <property type="evidence" value="ECO:0000266"/>
    <property type="project" value="ComplexPortal"/>
</dbReference>
<dbReference type="GO" id="GO:0005828">
    <property type="term" value="C:kinetochore microtubule"/>
    <property type="evidence" value="ECO:0000266"/>
    <property type="project" value="ComplexPortal"/>
</dbReference>
<dbReference type="GO" id="GO:0005765">
    <property type="term" value="C:lysosomal membrane"/>
    <property type="evidence" value="ECO:0000266"/>
    <property type="project" value="ComplexPortal"/>
</dbReference>
<dbReference type="GO" id="GO:0030496">
    <property type="term" value="C:midbody"/>
    <property type="evidence" value="ECO:0000266"/>
    <property type="project" value="ComplexPortal"/>
</dbReference>
<dbReference type="GO" id="GO:0032585">
    <property type="term" value="C:multivesicular body membrane"/>
    <property type="evidence" value="ECO:0000266"/>
    <property type="project" value="ComplexPortal"/>
</dbReference>
<dbReference type="GO" id="GO:0005635">
    <property type="term" value="C:nuclear envelope"/>
    <property type="evidence" value="ECO:0000250"/>
    <property type="project" value="UniProtKB"/>
</dbReference>
<dbReference type="GO" id="GO:0005643">
    <property type="term" value="C:nuclear pore"/>
    <property type="evidence" value="ECO:0000266"/>
    <property type="project" value="ComplexPortal"/>
</dbReference>
<dbReference type="GO" id="GO:0005654">
    <property type="term" value="C:nucleoplasm"/>
    <property type="evidence" value="ECO:0007669"/>
    <property type="project" value="Ensembl"/>
</dbReference>
<dbReference type="GO" id="GO:0005886">
    <property type="term" value="C:plasma membrane"/>
    <property type="evidence" value="ECO:0000266"/>
    <property type="project" value="ComplexPortal"/>
</dbReference>
<dbReference type="GO" id="GO:0097352">
    <property type="term" value="P:autophagosome maturation"/>
    <property type="evidence" value="ECO:0000266"/>
    <property type="project" value="ComplexPortal"/>
</dbReference>
<dbReference type="GO" id="GO:0006914">
    <property type="term" value="P:autophagy"/>
    <property type="evidence" value="ECO:0000266"/>
    <property type="project" value="ComplexPortal"/>
</dbReference>
<dbReference type="GO" id="GO:0010458">
    <property type="term" value="P:exit from mitosis"/>
    <property type="evidence" value="ECO:0000250"/>
    <property type="project" value="UniProtKB"/>
</dbReference>
<dbReference type="GO" id="GO:1902774">
    <property type="term" value="P:late endosome to lysosome transport"/>
    <property type="evidence" value="ECO:0000266"/>
    <property type="project" value="ComplexPortal"/>
</dbReference>
<dbReference type="GO" id="GO:0045324">
    <property type="term" value="P:late endosome to vacuole transport"/>
    <property type="evidence" value="ECO:0000250"/>
    <property type="project" value="UniProtKB"/>
</dbReference>
<dbReference type="GO" id="GO:0090148">
    <property type="term" value="P:membrane fission"/>
    <property type="evidence" value="ECO:0000303"/>
    <property type="project" value="ComplexPortal"/>
</dbReference>
<dbReference type="GO" id="GO:0061952">
    <property type="term" value="P:midbody abscission"/>
    <property type="evidence" value="ECO:0000266"/>
    <property type="project" value="ComplexPortal"/>
</dbReference>
<dbReference type="GO" id="GO:0007080">
    <property type="term" value="P:mitotic metaphase chromosome alignment"/>
    <property type="evidence" value="ECO:0000266"/>
    <property type="project" value="ComplexPortal"/>
</dbReference>
<dbReference type="GO" id="GO:0036258">
    <property type="term" value="P:multivesicular body assembly"/>
    <property type="evidence" value="ECO:0000303"/>
    <property type="project" value="ComplexPortal"/>
</dbReference>
<dbReference type="GO" id="GO:0071985">
    <property type="term" value="P:multivesicular body sorting pathway"/>
    <property type="evidence" value="ECO:0000266"/>
    <property type="project" value="ComplexPortal"/>
</dbReference>
<dbReference type="GO" id="GO:0061763">
    <property type="term" value="P:multivesicular body-lysosome fusion"/>
    <property type="evidence" value="ECO:0000303"/>
    <property type="project" value="ComplexPortal"/>
</dbReference>
<dbReference type="GO" id="GO:0031468">
    <property type="term" value="P:nuclear membrane reassembly"/>
    <property type="evidence" value="ECO:0000250"/>
    <property type="project" value="UniProtKB"/>
</dbReference>
<dbReference type="GO" id="GO:0006997">
    <property type="term" value="P:nucleus organization"/>
    <property type="evidence" value="ECO:0000266"/>
    <property type="project" value="ComplexPortal"/>
</dbReference>
<dbReference type="GO" id="GO:0001778">
    <property type="term" value="P:plasma membrane repair"/>
    <property type="evidence" value="ECO:0000266"/>
    <property type="project" value="ComplexPortal"/>
</dbReference>
<dbReference type="GO" id="GO:0071168">
    <property type="term" value="P:protein localization to chromatin"/>
    <property type="evidence" value="ECO:0007669"/>
    <property type="project" value="Ensembl"/>
</dbReference>
<dbReference type="GO" id="GO:0015031">
    <property type="term" value="P:protein transport"/>
    <property type="evidence" value="ECO:0007669"/>
    <property type="project" value="UniProtKB-KW"/>
</dbReference>
<dbReference type="GO" id="GO:1901673">
    <property type="term" value="P:regulation of mitotic spindle assembly"/>
    <property type="evidence" value="ECO:0000266"/>
    <property type="project" value="ComplexPortal"/>
</dbReference>
<dbReference type="GO" id="GO:0043162">
    <property type="term" value="P:ubiquitin-dependent protein catabolic process via the multivesicular body sorting pathway"/>
    <property type="evidence" value="ECO:0000266"/>
    <property type="project" value="ComplexPortal"/>
</dbReference>
<dbReference type="GO" id="GO:0051469">
    <property type="term" value="P:vesicle fusion with vacuole"/>
    <property type="evidence" value="ECO:0000303"/>
    <property type="project" value="ComplexPortal"/>
</dbReference>
<dbReference type="GO" id="GO:0046761">
    <property type="term" value="P:viral budding from plasma membrane"/>
    <property type="evidence" value="ECO:0000266"/>
    <property type="project" value="ComplexPortal"/>
</dbReference>
<dbReference type="GO" id="GO:0039702">
    <property type="term" value="P:viral budding via host ESCRT complex"/>
    <property type="evidence" value="ECO:0000266"/>
    <property type="project" value="ComplexPortal"/>
</dbReference>
<dbReference type="Gene3D" id="6.10.140.1230">
    <property type="match status" value="1"/>
</dbReference>
<dbReference type="InterPro" id="IPR005024">
    <property type="entry name" value="Snf7_fam"/>
</dbReference>
<dbReference type="PANTHER" id="PTHR22761">
    <property type="entry name" value="CHARGED MULTIVESICULAR BODY PROTEIN"/>
    <property type="match status" value="1"/>
</dbReference>
<dbReference type="PANTHER" id="PTHR22761:SF21">
    <property type="entry name" value="CHARGED MULTIVESICULAR BODY PROTEIN 7"/>
    <property type="match status" value="1"/>
</dbReference>
<dbReference type="Pfam" id="PF03357">
    <property type="entry name" value="Snf7"/>
    <property type="match status" value="1"/>
</dbReference>
<dbReference type="Pfam" id="PF25239">
    <property type="entry name" value="WHD_CHMP7"/>
    <property type="match status" value="1"/>
</dbReference>
<comment type="function">
    <text evidence="1">ESCRT-III-like protein required to recruit the ESCRT-III complex to the nuclear envelope (NE) during late anaphase (By similarity). Together with SPAST, the ESCRT-III complex promotes NE sealing and mitotic spindle disassembly during late anaphase (By similarity). Recruited to the reforming NE during anaphase by LEMD2 (By similarity). Plays a role in the endosomal sorting pathway (By similarity).</text>
</comment>
<comment type="subunit">
    <text evidence="1">Interacts with CHMP4B, but not with VPS25 (By similarity). Interacts with LEMD2 (via C-terminus) (By similarity).</text>
</comment>
<comment type="subcellular location">
    <subcellularLocation>
        <location evidence="1">Cytoplasm</location>
    </subcellularLocation>
    <subcellularLocation>
        <location evidence="1">Nucleus envelope</location>
    </subcellularLocation>
    <text evidence="1">Diffused localization, with some punctate distribution, especially in the perinuclear area. Localizes to the reforming nuclear envelope on chromatin disks during late anaphase.</text>
</comment>
<comment type="alternative products">
    <event type="alternative splicing"/>
    <isoform>
        <id>Q8R1T1-1</id>
        <name>1</name>
        <sequence type="displayed"/>
    </isoform>
    <isoform>
        <id>Q8R1T1-2</id>
        <name>2</name>
        <sequence type="described" ref="VSP_015343 VSP_015344"/>
    </isoform>
</comment>
<comment type="similarity">
    <text evidence="5">Belongs to the SNF7 family.</text>
</comment>